<organism>
    <name type="scientific">Puntigrus tetrazona</name>
    <name type="common">Sumatra barb</name>
    <name type="synonym">Puntius tetrazona</name>
    <dbReference type="NCBI Taxonomy" id="1606681"/>
    <lineage>
        <taxon>Eukaryota</taxon>
        <taxon>Metazoa</taxon>
        <taxon>Chordata</taxon>
        <taxon>Craniata</taxon>
        <taxon>Vertebrata</taxon>
        <taxon>Euteleostomi</taxon>
        <taxon>Actinopterygii</taxon>
        <taxon>Neopterygii</taxon>
        <taxon>Teleostei</taxon>
        <taxon>Ostariophysi</taxon>
        <taxon>Cypriniformes</taxon>
        <taxon>Cyprinidae</taxon>
        <taxon>Smiliogastrinae</taxon>
        <taxon>Puntigrus</taxon>
    </lineage>
</organism>
<evidence type="ECO:0000250" key="1"/>
<evidence type="ECO:0000250" key="2">
    <source>
        <dbReference type="UniProtKB" id="Q15465"/>
    </source>
</evidence>
<evidence type="ECO:0000305" key="3"/>
<sequence>NSLAISVMNQWPGVKLRVTEGWDEDGHHFEESLHYEGRAVDITTSDRDKSKYG</sequence>
<protein>
    <recommendedName>
        <fullName>Tiggy-winkle hedgehog protein</fullName>
    </recommendedName>
</protein>
<comment type="function">
    <text evidence="1">Intercellular signal essential for a variety of patterning events during development. Involved in dorso-ventral patterning of the brain and in early patterning of the developing eyes (By similarity).</text>
</comment>
<comment type="subcellular location">
    <subcellularLocation>
        <location evidence="1">Cell membrane</location>
    </subcellularLocation>
    <subcellularLocation>
        <location evidence="1">Secreted</location>
        <location evidence="1">Extracellular space</location>
    </subcellularLocation>
    <text evidence="1">Tiggy-winkle hedgehog protein N-product: Cell membrane; Lipid-anchor; Extracellular side. The N-terminal peptide remains associated with the cell surface. Tiggy-winkle hedgehog protein C-product: Secreted, extracellular space. The C-terminal peptide diffuses from the cell.</text>
</comment>
<comment type="PTM">
    <text evidence="1">The C-terminal domain displays an autoproteolysis activity and a cholesterol transferase activity. Both activities result in the cleavage of the full-length protein and covalent attachment of a cholesterol moiety to the C-terminal of the newly generated N-terminal fragment (N-product). This covalent modification appears to play an essential role in restricting the spatial distribution of the protein activity to the cell surface. The N-product is the active species in both local and long-range signaling, whereas the C-product has no signaling activity (By similarity).</text>
</comment>
<comment type="similarity">
    <text evidence="3">Belongs to the hedgehog family.</text>
</comment>
<keyword id="KW-0068">Autocatalytic cleavage</keyword>
<keyword id="KW-0106">Calcium</keyword>
<keyword id="KW-1003">Cell membrane</keyword>
<keyword id="KW-0217">Developmental protein</keyword>
<keyword id="KW-0378">Hydrolase</keyword>
<keyword id="KW-0472">Membrane</keyword>
<keyword id="KW-0479">Metal-binding</keyword>
<keyword id="KW-0645">Protease</keyword>
<keyword id="KW-0964">Secreted</keyword>
<keyword id="KW-0862">Zinc</keyword>
<dbReference type="EMBL" id="U68236">
    <property type="protein sequence ID" value="AAB38682.1"/>
    <property type="molecule type" value="Genomic_DNA"/>
</dbReference>
<dbReference type="SMR" id="P79855"/>
<dbReference type="GO" id="GO:0005615">
    <property type="term" value="C:extracellular space"/>
    <property type="evidence" value="ECO:0007669"/>
    <property type="project" value="TreeGrafter"/>
</dbReference>
<dbReference type="GO" id="GO:0005886">
    <property type="term" value="C:plasma membrane"/>
    <property type="evidence" value="ECO:0007669"/>
    <property type="project" value="UniProtKB-SubCell"/>
</dbReference>
<dbReference type="GO" id="GO:0005509">
    <property type="term" value="F:calcium ion binding"/>
    <property type="evidence" value="ECO:0007669"/>
    <property type="project" value="TreeGrafter"/>
</dbReference>
<dbReference type="GO" id="GO:0005113">
    <property type="term" value="F:patched binding"/>
    <property type="evidence" value="ECO:0007669"/>
    <property type="project" value="TreeGrafter"/>
</dbReference>
<dbReference type="GO" id="GO:0008233">
    <property type="term" value="F:peptidase activity"/>
    <property type="evidence" value="ECO:0007669"/>
    <property type="project" value="UniProtKB-KW"/>
</dbReference>
<dbReference type="GO" id="GO:0048513">
    <property type="term" value="P:animal organ development"/>
    <property type="evidence" value="ECO:0007669"/>
    <property type="project" value="UniProtKB-ARBA"/>
</dbReference>
<dbReference type="GO" id="GO:0048468">
    <property type="term" value="P:cell development"/>
    <property type="evidence" value="ECO:0007669"/>
    <property type="project" value="UniProtKB-ARBA"/>
</dbReference>
<dbReference type="GO" id="GO:0001708">
    <property type="term" value="P:cell fate specification"/>
    <property type="evidence" value="ECO:0007669"/>
    <property type="project" value="TreeGrafter"/>
</dbReference>
<dbReference type="GO" id="GO:0007267">
    <property type="term" value="P:cell-cell signaling"/>
    <property type="evidence" value="ECO:0007669"/>
    <property type="project" value="InterPro"/>
</dbReference>
<dbReference type="GO" id="GO:0007417">
    <property type="term" value="P:central nervous system development"/>
    <property type="evidence" value="ECO:0007669"/>
    <property type="project" value="UniProtKB-ARBA"/>
</dbReference>
<dbReference type="GO" id="GO:0030182">
    <property type="term" value="P:neuron differentiation"/>
    <property type="evidence" value="ECO:0007669"/>
    <property type="project" value="UniProtKB-ARBA"/>
</dbReference>
<dbReference type="GO" id="GO:0006508">
    <property type="term" value="P:proteolysis"/>
    <property type="evidence" value="ECO:0007669"/>
    <property type="project" value="UniProtKB-KW"/>
</dbReference>
<dbReference type="GO" id="GO:0010468">
    <property type="term" value="P:regulation of gene expression"/>
    <property type="evidence" value="ECO:0007669"/>
    <property type="project" value="TreeGrafter"/>
</dbReference>
<dbReference type="GO" id="GO:0007224">
    <property type="term" value="P:smoothened signaling pathway"/>
    <property type="evidence" value="ECO:0007669"/>
    <property type="project" value="TreeGrafter"/>
</dbReference>
<dbReference type="GO" id="GO:0009888">
    <property type="term" value="P:tissue development"/>
    <property type="evidence" value="ECO:0007669"/>
    <property type="project" value="UniProtKB-ARBA"/>
</dbReference>
<dbReference type="Gene3D" id="3.30.1380.10">
    <property type="match status" value="1"/>
</dbReference>
<dbReference type="InterPro" id="IPR001657">
    <property type="entry name" value="Hedgehog"/>
</dbReference>
<dbReference type="InterPro" id="IPR009045">
    <property type="entry name" value="Hedgehog_sig/DD-Pept_Zn-bd_sf"/>
</dbReference>
<dbReference type="InterPro" id="IPR050387">
    <property type="entry name" value="Hedgehog_Signaling"/>
</dbReference>
<dbReference type="InterPro" id="IPR000320">
    <property type="entry name" value="Hedgehog_signalling_dom"/>
</dbReference>
<dbReference type="PANTHER" id="PTHR11889">
    <property type="entry name" value="HEDGEHOG"/>
    <property type="match status" value="1"/>
</dbReference>
<dbReference type="PANTHER" id="PTHR11889:SF36">
    <property type="entry name" value="SONIC HEDGEHOG PROTEIN"/>
    <property type="match status" value="1"/>
</dbReference>
<dbReference type="Pfam" id="PF01085">
    <property type="entry name" value="HH_signal"/>
    <property type="match status" value="1"/>
</dbReference>
<dbReference type="PRINTS" id="PR00632">
    <property type="entry name" value="SONICHHOG"/>
</dbReference>
<dbReference type="SUPFAM" id="SSF55166">
    <property type="entry name" value="Hedgehog/DD-peptidase"/>
    <property type="match status" value="1"/>
</dbReference>
<accession>P79855</accession>
<proteinExistence type="inferred from homology"/>
<reference key="1">
    <citation type="journal article" date="1996" name="Proc. Natl. Acad. Sci. U.S.A.">
        <title>Evolutionary analyses of hedgehog and Hoxd-10 genes in fish species closely related to the zebrafish.</title>
        <authorList>
            <person name="Zardoya R."/>
            <person name="Abouheif E."/>
            <person name="Meyer A."/>
        </authorList>
    </citation>
    <scope>NUCLEOTIDE SEQUENCE [GENOMIC DNA]</scope>
    <source>
        <tissue>Muscle</tissue>
    </source>
</reference>
<name>TWHH_PUNTE</name>
<feature type="chain" id="PRO_0000058758" description="Tiggy-winkle hedgehog protein">
    <location>
        <begin position="1" status="less than"/>
        <end position="53" status="greater than"/>
    </location>
</feature>
<feature type="binding site" evidence="2">
    <location>
        <position position="19"/>
    </location>
    <ligand>
        <name>Ca(2+)</name>
        <dbReference type="ChEBI" id="CHEBI:29108"/>
        <label>1</label>
    </ligand>
</feature>
<feature type="binding site" evidence="2">
    <location>
        <position position="20"/>
    </location>
    <ligand>
        <name>Ca(2+)</name>
        <dbReference type="ChEBI" id="CHEBI:29108"/>
        <label>1</label>
    </ligand>
</feature>
<feature type="binding site" evidence="2">
    <location>
        <position position="20"/>
    </location>
    <ligand>
        <name>Ca(2+)</name>
        <dbReference type="ChEBI" id="CHEBI:29108"/>
        <label>2</label>
    </ligand>
</feature>
<feature type="binding site" evidence="2">
    <location>
        <position position="23"/>
    </location>
    <ligand>
        <name>Ca(2+)</name>
        <dbReference type="ChEBI" id="CHEBI:29108"/>
        <label>2</label>
    </ligand>
</feature>
<feature type="binding site" evidence="2">
    <location>
        <position position="25"/>
    </location>
    <ligand>
        <name>Ca(2+)</name>
        <dbReference type="ChEBI" id="CHEBI:29108"/>
        <label>2</label>
    </ligand>
</feature>
<feature type="binding site" evidence="2">
    <location>
        <position position="34"/>
    </location>
    <ligand>
        <name>Zn(2+)</name>
        <dbReference type="ChEBI" id="CHEBI:29105"/>
    </ligand>
</feature>
<feature type="binding site" evidence="2">
    <location>
        <position position="41"/>
    </location>
    <ligand>
        <name>Zn(2+)</name>
        <dbReference type="ChEBI" id="CHEBI:29105"/>
    </ligand>
</feature>
<feature type="non-terminal residue">
    <location>
        <position position="1"/>
    </location>
</feature>
<feature type="non-terminal residue">
    <location>
        <position position="53"/>
    </location>
</feature>
<gene>
    <name type="primary">twhh</name>
</gene>